<reference key="1">
    <citation type="journal article" date="1995" name="Plant Physiol.">
        <title>Activation of two osmotin-like protein genes by abiotic stimuli and fungal pathogen in transgenic potato plants.</title>
        <authorList>
            <person name="Zhu B."/>
            <person name="Chen T.H.H."/>
            <person name="Li P.H."/>
        </authorList>
    </citation>
    <scope>NUCLEOTIDE SEQUENCE [GENOMIC DNA]</scope>
</reference>
<reference key="2">
    <citation type="journal article" date="1995" name="Plant Mol. Biol.">
        <title>Expression of three osmotin-like protein genes in response to osmotic stress and fungal infection in potato.</title>
        <authorList>
            <person name="Zhu B."/>
            <person name="Chen T.H.H."/>
            <person name="Li P.H."/>
        </authorList>
    </citation>
    <scope>NUCLEOTIDE SEQUENCE [MRNA]</scope>
</reference>
<accession>P50702</accession>
<proteinExistence type="evidence at transcript level"/>
<evidence type="ECO:0000255" key="1"/>
<evidence type="ECO:0000255" key="2">
    <source>
        <dbReference type="PROSITE-ProRule" id="PRU00699"/>
    </source>
</evidence>
<evidence type="ECO:0000305" key="3"/>
<feature type="signal peptide" evidence="1">
    <location>
        <begin position="1"/>
        <end position="21"/>
    </location>
</feature>
<feature type="chain" id="PRO_0000034041" description="Osmotin-like protein OSML81">
    <location>
        <begin position="22"/>
        <end position="247"/>
    </location>
</feature>
<feature type="disulfide bond" evidence="2">
    <location>
        <begin position="30"/>
        <end position="225"/>
    </location>
</feature>
<feature type="disulfide bond" evidence="2">
    <location>
        <begin position="72"/>
        <end position="82"/>
    </location>
</feature>
<feature type="disulfide bond" evidence="2">
    <location>
        <begin position="87"/>
        <end position="93"/>
    </location>
</feature>
<feature type="disulfide bond" evidence="2">
    <location>
        <begin position="141"/>
        <end position="213"/>
    </location>
</feature>
<feature type="disulfide bond" evidence="2">
    <location>
        <begin position="146"/>
        <end position="196"/>
    </location>
</feature>
<feature type="disulfide bond" evidence="2">
    <location>
        <begin position="154"/>
        <end position="164"/>
    </location>
</feature>
<feature type="disulfide bond" evidence="2">
    <location>
        <begin position="168"/>
        <end position="177"/>
    </location>
</feature>
<feature type="disulfide bond" evidence="2">
    <location>
        <begin position="178"/>
        <end position="183"/>
    </location>
</feature>
<feature type="sequence conflict" description="In Ref. 2; CAA51430." evidence="3" ref="2">
    <original>Q</original>
    <variation>L</variation>
    <location>
        <position position="92"/>
    </location>
</feature>
<name>OS81_SOLCO</name>
<keyword id="KW-1015">Disulfide bond</keyword>
<keyword id="KW-0732">Signal</keyword>
<keyword id="KW-0346">Stress response</keyword>
<dbReference type="EMBL" id="X72927">
    <property type="protein sequence ID" value="CAA51431.1"/>
    <property type="molecule type" value="Genomic_DNA"/>
</dbReference>
<dbReference type="EMBL" id="X72926">
    <property type="protein sequence ID" value="CAA51430.1"/>
    <property type="molecule type" value="mRNA"/>
</dbReference>
<dbReference type="PIR" id="S33196">
    <property type="entry name" value="S33196"/>
</dbReference>
<dbReference type="PIR" id="S33197">
    <property type="entry name" value="S33197"/>
</dbReference>
<dbReference type="SMR" id="P50702"/>
<dbReference type="PhylomeDB" id="P50702"/>
<dbReference type="CDD" id="cd09217">
    <property type="entry name" value="TLP-P"/>
    <property type="match status" value="1"/>
</dbReference>
<dbReference type="FunFam" id="2.60.110.10:FF:000003">
    <property type="entry name" value="Thaumatin I"/>
    <property type="match status" value="1"/>
</dbReference>
<dbReference type="Gene3D" id="2.60.110.10">
    <property type="entry name" value="Thaumatin"/>
    <property type="match status" value="1"/>
</dbReference>
<dbReference type="InterPro" id="IPR037176">
    <property type="entry name" value="Osmotin/thaumatin-like_sf"/>
</dbReference>
<dbReference type="InterPro" id="IPR001938">
    <property type="entry name" value="Thaumatin"/>
</dbReference>
<dbReference type="InterPro" id="IPR017949">
    <property type="entry name" value="Thaumatin_CS"/>
</dbReference>
<dbReference type="PANTHER" id="PTHR31048">
    <property type="entry name" value="OS03G0233200 PROTEIN"/>
    <property type="match status" value="1"/>
</dbReference>
<dbReference type="Pfam" id="PF00314">
    <property type="entry name" value="Thaumatin"/>
    <property type="match status" value="1"/>
</dbReference>
<dbReference type="PIRSF" id="PIRSF002703">
    <property type="entry name" value="Thaumatin"/>
    <property type="match status" value="1"/>
</dbReference>
<dbReference type="PRINTS" id="PR00347">
    <property type="entry name" value="THAUMATIN"/>
</dbReference>
<dbReference type="SMART" id="SM00205">
    <property type="entry name" value="THN"/>
    <property type="match status" value="1"/>
</dbReference>
<dbReference type="SUPFAM" id="SSF49870">
    <property type="entry name" value="Osmotin, thaumatin-like protein"/>
    <property type="match status" value="1"/>
</dbReference>
<dbReference type="PROSITE" id="PS00316">
    <property type="entry name" value="THAUMATIN_1"/>
    <property type="match status" value="1"/>
</dbReference>
<dbReference type="PROSITE" id="PS51367">
    <property type="entry name" value="THAUMATIN_2"/>
    <property type="match status" value="1"/>
</dbReference>
<protein>
    <recommendedName>
        <fullName>Osmotin-like protein OSML81</fullName>
    </recommendedName>
    <alternativeName>
        <fullName>PA81</fullName>
    </alternativeName>
</protein>
<sequence length="247" mass="26659">MGYLRSSFIFSLLAFVTYTYAATIEVRNNCPYTVWAASTPIGGGRRLNKGQTWVINAPRGTKMARIWGRTGCNFNAAGRGSCQTGDCGGVLQCTGWGKPPNTLAEYALDQFSNLDFWDISLVDGFNIPMTFAPTKPSAGKCHAIHCTANINGECPRALKVPGGCNNPCTTFGGQQYCCTQGPCGPTELSKFFKKRCPDAYSYPQDDPTSTFTCPSGSTNYRVVFCPNGVADPNFPLEMPASTDEVAK</sequence>
<comment type="induction">
    <text>By abscisic acid (ABA), salt, salicylic acid, wounding, and fungal infection.</text>
</comment>
<comment type="similarity">
    <text evidence="2">Belongs to the thaumatin family.</text>
</comment>
<organism>
    <name type="scientific">Solanum commersonii</name>
    <name type="common">Commerson's wild potato</name>
    <name type="synonym">Commerson's nightshade</name>
    <dbReference type="NCBI Taxonomy" id="4109"/>
    <lineage>
        <taxon>Eukaryota</taxon>
        <taxon>Viridiplantae</taxon>
        <taxon>Streptophyta</taxon>
        <taxon>Embryophyta</taxon>
        <taxon>Tracheophyta</taxon>
        <taxon>Spermatophyta</taxon>
        <taxon>Magnoliopsida</taxon>
        <taxon>eudicotyledons</taxon>
        <taxon>Gunneridae</taxon>
        <taxon>Pentapetalae</taxon>
        <taxon>asterids</taxon>
        <taxon>lamiids</taxon>
        <taxon>Solanales</taxon>
        <taxon>Solanaceae</taxon>
        <taxon>Solanoideae</taxon>
        <taxon>Solaneae</taxon>
        <taxon>Solanum</taxon>
    </lineage>
</organism>